<keyword id="KW-0029">Amino-acid transport</keyword>
<keyword id="KW-0175">Coiled coil</keyword>
<keyword id="KW-0472">Membrane</keyword>
<keyword id="KW-0597">Phosphoprotein</keyword>
<keyword id="KW-1185">Reference proteome</keyword>
<keyword id="KW-0812">Transmembrane</keyword>
<keyword id="KW-1133">Transmembrane helix</keyword>
<keyword id="KW-0813">Transport</keyword>
<dbReference type="EMBL" id="AABR07030916">
    <property type="status" value="NOT_ANNOTATED_CDS"/>
    <property type="molecule type" value="Genomic_DNA"/>
</dbReference>
<dbReference type="EMBL" id="AABR07030917">
    <property type="status" value="NOT_ANNOTATED_CDS"/>
    <property type="molecule type" value="Genomic_DNA"/>
</dbReference>
<dbReference type="EMBL" id="CH473948">
    <property type="protein sequence ID" value="EDM06818.1"/>
    <property type="molecule type" value="Genomic_DNA"/>
</dbReference>
<dbReference type="RefSeq" id="XP_001081800.3">
    <property type="nucleotide sequence ID" value="XM_001081800.6"/>
</dbReference>
<dbReference type="RefSeq" id="XP_221195.5">
    <property type="nucleotide sequence ID" value="XM_221195.8"/>
</dbReference>
<dbReference type="SMR" id="E9PT23"/>
<dbReference type="FunCoup" id="E9PT23">
    <property type="interactions" value="984"/>
</dbReference>
<dbReference type="STRING" id="10116.ENSRNOP00000006225"/>
<dbReference type="iPTMnet" id="E9PT23"/>
<dbReference type="PhosphoSitePlus" id="E9PT23"/>
<dbReference type="jPOST" id="E9PT23"/>
<dbReference type="PaxDb" id="10116-ENSRNOP00000006225"/>
<dbReference type="PeptideAtlas" id="E9PT23"/>
<dbReference type="GeneID" id="303740"/>
<dbReference type="AGR" id="RGD:1306356"/>
<dbReference type="CTD" id="124565"/>
<dbReference type="RGD" id="1306356">
    <property type="gene designation" value="Slc38a10"/>
</dbReference>
<dbReference type="VEuPathDB" id="HostDB:ENSRNOG00000004604"/>
<dbReference type="eggNOG" id="KOG1305">
    <property type="taxonomic scope" value="Eukaryota"/>
</dbReference>
<dbReference type="HOGENOM" id="CLU_009020_6_0_1"/>
<dbReference type="InParanoid" id="E9PT23"/>
<dbReference type="PRO" id="PR:E9PT23"/>
<dbReference type="Proteomes" id="UP000002494">
    <property type="component" value="Chromosome 10"/>
</dbReference>
<dbReference type="Proteomes" id="UP000234681">
    <property type="component" value="Chromosome 10"/>
</dbReference>
<dbReference type="Bgee" id="ENSRNOG00000004604">
    <property type="expression patterns" value="Expressed in liver and 19 other cell types or tissues"/>
</dbReference>
<dbReference type="GO" id="GO:0016020">
    <property type="term" value="C:membrane"/>
    <property type="evidence" value="ECO:0000318"/>
    <property type="project" value="GO_Central"/>
</dbReference>
<dbReference type="GO" id="GO:0022853">
    <property type="term" value="F:active monoatomic ion transmembrane transporter activity"/>
    <property type="evidence" value="ECO:0007669"/>
    <property type="project" value="UniProtKB-ARBA"/>
</dbReference>
<dbReference type="GO" id="GO:0022890">
    <property type="term" value="F:inorganic cation transmembrane transporter activity"/>
    <property type="evidence" value="ECO:0007669"/>
    <property type="project" value="UniProtKB-ARBA"/>
</dbReference>
<dbReference type="GO" id="GO:0015179">
    <property type="term" value="F:L-amino acid transmembrane transporter activity"/>
    <property type="evidence" value="ECO:0000318"/>
    <property type="project" value="GO_Central"/>
</dbReference>
<dbReference type="GO" id="GO:0008324">
    <property type="term" value="F:monoatomic cation transmembrane transporter activity"/>
    <property type="evidence" value="ECO:0007669"/>
    <property type="project" value="UniProtKB-ARBA"/>
</dbReference>
<dbReference type="GO" id="GO:0015175">
    <property type="term" value="F:neutral L-amino acid transmembrane transporter activity"/>
    <property type="evidence" value="ECO:0007669"/>
    <property type="project" value="UniProtKB-ARBA"/>
</dbReference>
<dbReference type="GO" id="GO:0015291">
    <property type="term" value="F:secondary active transmembrane transporter activity"/>
    <property type="evidence" value="ECO:0007669"/>
    <property type="project" value="UniProtKB-ARBA"/>
</dbReference>
<dbReference type="GO" id="GO:0003333">
    <property type="term" value="P:amino acid transmembrane transport"/>
    <property type="evidence" value="ECO:0000318"/>
    <property type="project" value="GO_Central"/>
</dbReference>
<dbReference type="GO" id="GO:0060348">
    <property type="term" value="P:bone development"/>
    <property type="evidence" value="ECO:0000266"/>
    <property type="project" value="RGD"/>
</dbReference>
<dbReference type="GO" id="GO:0098662">
    <property type="term" value="P:inorganic cation transmembrane transport"/>
    <property type="evidence" value="ECO:0007669"/>
    <property type="project" value="UniProtKB-ARBA"/>
</dbReference>
<dbReference type="InterPro" id="IPR013057">
    <property type="entry name" value="AA_transpt_TM"/>
</dbReference>
<dbReference type="PANTHER" id="PTHR22950">
    <property type="entry name" value="AMINO ACID TRANSPORTER"/>
    <property type="match status" value="1"/>
</dbReference>
<dbReference type="PANTHER" id="PTHR22950:SF646">
    <property type="entry name" value="SODIUM-COUPLED NEUTRAL AMINO ACID TRANSPORTER 10-RELATED"/>
    <property type="match status" value="1"/>
</dbReference>
<dbReference type="Pfam" id="PF01490">
    <property type="entry name" value="Aa_trans"/>
    <property type="match status" value="1"/>
</dbReference>
<comment type="function">
    <text evidence="1">Facilitates bidirectional transport of amino acids. May act as a glutamate sensor that regulates glutamate-glutamine cycle and mTOR signaling in the brain. The transport mechanism remains to be elucidated.</text>
</comment>
<comment type="catalytic activity">
    <reaction evidence="1">
        <text>L-glutamate(out) = L-glutamate(in)</text>
        <dbReference type="Rhea" id="RHEA:66336"/>
        <dbReference type="ChEBI" id="CHEBI:29985"/>
    </reaction>
    <physiologicalReaction direction="left-to-right" evidence="1">
        <dbReference type="Rhea" id="RHEA:66337"/>
    </physiologicalReaction>
    <physiologicalReaction direction="right-to-left" evidence="1">
        <dbReference type="Rhea" id="RHEA:66338"/>
    </physiologicalReaction>
</comment>
<comment type="catalytic activity">
    <reaction evidence="1">
        <text>L-glutamine(out) = L-glutamine(in)</text>
        <dbReference type="Rhea" id="RHEA:73419"/>
        <dbReference type="ChEBI" id="CHEBI:58359"/>
    </reaction>
    <physiologicalReaction direction="left-to-right" evidence="1">
        <dbReference type="Rhea" id="RHEA:73420"/>
    </physiologicalReaction>
    <physiologicalReaction direction="right-to-left" evidence="1">
        <dbReference type="Rhea" id="RHEA:73421"/>
    </physiologicalReaction>
</comment>
<comment type="catalytic activity">
    <reaction evidence="1">
        <text>L-alanine(in) = L-alanine(out)</text>
        <dbReference type="Rhea" id="RHEA:70719"/>
        <dbReference type="ChEBI" id="CHEBI:57972"/>
    </reaction>
    <physiologicalReaction direction="left-to-right" evidence="1">
        <dbReference type="Rhea" id="RHEA:70720"/>
    </physiologicalReaction>
    <physiologicalReaction direction="right-to-left" evidence="1">
        <dbReference type="Rhea" id="RHEA:70721"/>
    </physiologicalReaction>
</comment>
<comment type="catalytic activity">
    <reaction evidence="1">
        <text>L-serine(in) = L-serine(out)</text>
        <dbReference type="Rhea" id="RHEA:35031"/>
        <dbReference type="ChEBI" id="CHEBI:33384"/>
    </reaction>
    <physiologicalReaction direction="left-to-right" evidence="1">
        <dbReference type="Rhea" id="RHEA:35032"/>
    </physiologicalReaction>
</comment>
<comment type="catalytic activity">
    <reaction evidence="1">
        <text>L-leucine(in) = L-leucine(out)</text>
        <dbReference type="Rhea" id="RHEA:73011"/>
        <dbReference type="ChEBI" id="CHEBI:57427"/>
    </reaction>
    <physiologicalReaction direction="right-to-left" evidence="1">
        <dbReference type="Rhea" id="RHEA:73013"/>
    </physiologicalReaction>
</comment>
<comment type="subcellular location">
    <subcellularLocation>
        <location evidence="3">Membrane</location>
        <topology evidence="3">Multi-pass membrane protein</topology>
    </subcellularLocation>
</comment>
<comment type="tissue specificity">
    <text evidence="5">Only expressed in the pituitary, adrenal gland, stomach and in the upper gastrointestinal tract.</text>
</comment>
<comment type="similarity">
    <text evidence="6">Belongs to the amino acid/polyamine transporter 2 family.</text>
</comment>
<proteinExistence type="evidence at protein level"/>
<feature type="chain" id="PRO_0000434576" description="Solute carrier family 38 member 10">
    <location>
        <begin position="1"/>
        <end position="1099"/>
    </location>
</feature>
<feature type="transmembrane region" description="Helical" evidence="3">
    <location>
        <begin position="9"/>
        <end position="31"/>
    </location>
</feature>
<feature type="transmembrane region" description="Helical" evidence="3">
    <location>
        <begin position="36"/>
        <end position="58"/>
    </location>
</feature>
<feature type="transmembrane region" description="Helical" evidence="3">
    <location>
        <begin position="84"/>
        <end position="104"/>
    </location>
</feature>
<feature type="transmembrane region" description="Helical" evidence="3">
    <location>
        <begin position="123"/>
        <end position="143"/>
    </location>
</feature>
<feature type="transmembrane region" description="Helical" evidence="3">
    <location>
        <begin position="153"/>
        <end position="173"/>
    </location>
</feature>
<feature type="transmembrane region" description="Helical" evidence="3">
    <location>
        <begin position="229"/>
        <end position="249"/>
    </location>
</feature>
<feature type="transmembrane region" description="Helical" evidence="3">
    <location>
        <begin position="272"/>
        <end position="292"/>
    </location>
</feature>
<feature type="transmembrane region" description="Helical" evidence="3">
    <location>
        <begin position="323"/>
        <end position="343"/>
    </location>
</feature>
<feature type="transmembrane region" description="Helical" evidence="3">
    <location>
        <begin position="345"/>
        <end position="365"/>
    </location>
</feature>
<feature type="transmembrane region" description="Helical" evidence="3">
    <location>
        <begin position="378"/>
        <end position="398"/>
    </location>
</feature>
<feature type="region of interest" description="Disordered" evidence="4">
    <location>
        <begin position="440"/>
        <end position="679"/>
    </location>
</feature>
<feature type="region of interest" description="Disordered" evidence="4">
    <location>
        <begin position="720"/>
        <end position="1047"/>
    </location>
</feature>
<feature type="coiled-coil region" evidence="3">
    <location>
        <begin position="698"/>
        <end position="734"/>
    </location>
</feature>
<feature type="compositionally biased region" description="Basic and acidic residues" evidence="4">
    <location>
        <begin position="441"/>
        <end position="454"/>
    </location>
</feature>
<feature type="compositionally biased region" description="Basic and acidic residues" evidence="4">
    <location>
        <begin position="493"/>
        <end position="508"/>
    </location>
</feature>
<feature type="compositionally biased region" description="Basic and acidic residues" evidence="4">
    <location>
        <begin position="517"/>
        <end position="528"/>
    </location>
</feature>
<feature type="compositionally biased region" description="Basic and acidic residues" evidence="4">
    <location>
        <begin position="544"/>
        <end position="561"/>
    </location>
</feature>
<feature type="compositionally biased region" description="Basic and acidic residues" evidence="4">
    <location>
        <begin position="586"/>
        <end position="599"/>
    </location>
</feature>
<feature type="compositionally biased region" description="Basic and acidic residues" evidence="4">
    <location>
        <begin position="653"/>
        <end position="663"/>
    </location>
</feature>
<feature type="compositionally biased region" description="Basic and acidic residues" evidence="4">
    <location>
        <begin position="720"/>
        <end position="735"/>
    </location>
</feature>
<feature type="compositionally biased region" description="Basic and acidic residues" evidence="4">
    <location>
        <begin position="749"/>
        <end position="766"/>
    </location>
</feature>
<feature type="compositionally biased region" description="Basic and acidic residues" evidence="4">
    <location>
        <begin position="793"/>
        <end position="802"/>
    </location>
</feature>
<feature type="compositionally biased region" description="Basic and acidic residues" evidence="4">
    <location>
        <begin position="852"/>
        <end position="894"/>
    </location>
</feature>
<feature type="compositionally biased region" description="Basic and acidic residues" evidence="4">
    <location>
        <begin position="917"/>
        <end position="928"/>
    </location>
</feature>
<feature type="compositionally biased region" description="Basic and acidic residues" evidence="4">
    <location>
        <begin position="957"/>
        <end position="969"/>
    </location>
</feature>
<feature type="compositionally biased region" description="Basic and acidic residues" evidence="4">
    <location>
        <begin position="1010"/>
        <end position="1022"/>
    </location>
</feature>
<feature type="modified residue" description="Phosphoserine" evidence="8">
    <location>
        <position position="441"/>
    </location>
</feature>
<feature type="modified residue" description="Phosphoserine" evidence="8">
    <location>
        <position position="607"/>
    </location>
</feature>
<feature type="modified residue" description="Phosphoserine" evidence="1">
    <location>
        <position position="635"/>
    </location>
</feature>
<feature type="modified residue" description="Phosphothreonine" evidence="2">
    <location>
        <position position="767"/>
    </location>
</feature>
<feature type="modified residue" description="Phosphoserine" evidence="8">
    <location>
        <position position="886"/>
    </location>
</feature>
<sequence>MTAASTSKWGLVTNVVNSIVGVSVLTMPFCFKQCGIVLGALLLVFCSWMTHQSCMFLVKSASLSKRRTYAGLAFHAYGKAGKMLVETSMIGLMLGSCITFYVVIGDLGSNFFAPLLGLQVTRTFRVFLLFAVSLCIVLPLSLQRNMMASIQSFSAMALLFYTVFMFVIVLSSFKHGLFSGQWLQRVSYIRWEGVFRCVPIFGMSFACQSQVLPTYDSLDEPSVKTMSSIFASSLNVVTAFYVMVGFFGYVSFTDATTGNVLIHFPSNLVTEMIRVGFVMSVAVGFPMMILPCRQALNTLLFEQQQKDGTFAAGGYMPPLRFKVLTLSVVFGTMVGGVMIPNVETILGFTGATMGSLICFICPALIYKKAHKNAPSAQVVLWVGLGILVVSTLTTLSVSEEAPLDLTQGARSGQRGDAEGAMKVEAARLSVQDPVVVMAEDSQEKLKPAEDKEVLEQAQIKGPVDVPGGDTPKEKQEAAQLDRPGQGIAVPMGEAHRHEPPIPHDKVVVDEGQDQEGPEEKKPPPKLPDEGDPAGRGQGAPLLPESEKKQDPERGEEGKRPEQVLAVGEIERPQKIPEANGQPPVQPRKEDSRPGNRDLHPVPQARVSVELNDLVAGEGKESAQKAGGAPWKPMESAVESNIGGKAGLAVQRPEAAEQREKNEAEQPGGDQAGSKLEEAGRAEMLDHAVLLQVIKEQQVQQKRLLDQQEKLLAVIEEQHKEIRQQRQEGEEDKPKPADMQPEPGAAVLRGQEEEAEHAGAPDEHAGETLEDNPSQPLQPVLGAPRGHPAPSQDKGQHPLEEVKVLAGRDLADLPAGGSDTEPHGASSKLREDQKGAALKVAEAVRKLVPGDLEPVHKPDPAEVPKSPEKQLAKEVARQRQDVFGEGSQERKETGKDAVAPGADTQKEAAQPLVGAEAEDSHSKSRHSEPTKVPASGPAGMGFQAQARFRQEPQVIFDKSQDSHPEVRSEGPRGVGIPAEEQHRGRGAAAMQEEKQRPDPNSGPKLAVPGDQKPENAKPNRDLKVQAGSDLRRRRRDLASPPEQELAPKDGVIISFNSLPNVQVNDLRSALDTQLRQAAGAALQVVHSRQIKQLSGDLEEA</sequence>
<accession>E9PT23</accession>
<protein>
    <recommendedName>
        <fullName evidence="1">Solute carrier family 38 member 10</fullName>
    </recommendedName>
    <alternativeName>
        <fullName evidence="1">Amino acid transporter SLC38A10</fullName>
    </alternativeName>
</protein>
<organism>
    <name type="scientific">Rattus norvegicus</name>
    <name type="common">Rat</name>
    <dbReference type="NCBI Taxonomy" id="10116"/>
    <lineage>
        <taxon>Eukaryota</taxon>
        <taxon>Metazoa</taxon>
        <taxon>Chordata</taxon>
        <taxon>Craniata</taxon>
        <taxon>Vertebrata</taxon>
        <taxon>Euteleostomi</taxon>
        <taxon>Mammalia</taxon>
        <taxon>Eutheria</taxon>
        <taxon>Euarchontoglires</taxon>
        <taxon>Glires</taxon>
        <taxon>Rodentia</taxon>
        <taxon>Myomorpha</taxon>
        <taxon>Muroidea</taxon>
        <taxon>Muridae</taxon>
        <taxon>Murinae</taxon>
        <taxon>Rattus</taxon>
    </lineage>
</organism>
<gene>
    <name evidence="1 7" type="primary">Slc38a10</name>
</gene>
<name>S38AA_RAT</name>
<reference key="1">
    <citation type="journal article" date="2004" name="Nature">
        <title>Genome sequence of the Brown Norway rat yields insights into mammalian evolution.</title>
        <authorList>
            <person name="Gibbs R.A."/>
            <person name="Weinstock G.M."/>
            <person name="Metzker M.L."/>
            <person name="Muzny D.M."/>
            <person name="Sodergren E.J."/>
            <person name="Scherer S."/>
            <person name="Scott G."/>
            <person name="Steffen D."/>
            <person name="Worley K.C."/>
            <person name="Burch P.E."/>
            <person name="Okwuonu G."/>
            <person name="Hines S."/>
            <person name="Lewis L."/>
            <person name="Deramo C."/>
            <person name="Delgado O."/>
            <person name="Dugan-Rocha S."/>
            <person name="Miner G."/>
            <person name="Morgan M."/>
            <person name="Hawes A."/>
            <person name="Gill R."/>
            <person name="Holt R.A."/>
            <person name="Adams M.D."/>
            <person name="Amanatides P.G."/>
            <person name="Baden-Tillson H."/>
            <person name="Barnstead M."/>
            <person name="Chin S."/>
            <person name="Evans C.A."/>
            <person name="Ferriera S."/>
            <person name="Fosler C."/>
            <person name="Glodek A."/>
            <person name="Gu Z."/>
            <person name="Jennings D."/>
            <person name="Kraft C.L."/>
            <person name="Nguyen T."/>
            <person name="Pfannkoch C.M."/>
            <person name="Sitter C."/>
            <person name="Sutton G.G."/>
            <person name="Venter J.C."/>
            <person name="Woodage T."/>
            <person name="Smith D."/>
            <person name="Lee H.-M."/>
            <person name="Gustafson E."/>
            <person name="Cahill P."/>
            <person name="Kana A."/>
            <person name="Doucette-Stamm L."/>
            <person name="Weinstock K."/>
            <person name="Fechtel K."/>
            <person name="Weiss R.B."/>
            <person name="Dunn D.M."/>
            <person name="Green E.D."/>
            <person name="Blakesley R.W."/>
            <person name="Bouffard G.G."/>
            <person name="De Jong P.J."/>
            <person name="Osoegawa K."/>
            <person name="Zhu B."/>
            <person name="Marra M."/>
            <person name="Schein J."/>
            <person name="Bosdet I."/>
            <person name="Fjell C."/>
            <person name="Jones S."/>
            <person name="Krzywinski M."/>
            <person name="Mathewson C."/>
            <person name="Siddiqui A."/>
            <person name="Wye N."/>
            <person name="McPherson J."/>
            <person name="Zhao S."/>
            <person name="Fraser C.M."/>
            <person name="Shetty J."/>
            <person name="Shatsman S."/>
            <person name="Geer K."/>
            <person name="Chen Y."/>
            <person name="Abramzon S."/>
            <person name="Nierman W.C."/>
            <person name="Havlak P.H."/>
            <person name="Chen R."/>
            <person name="Durbin K.J."/>
            <person name="Egan A."/>
            <person name="Ren Y."/>
            <person name="Song X.-Z."/>
            <person name="Li B."/>
            <person name="Liu Y."/>
            <person name="Qin X."/>
            <person name="Cawley S."/>
            <person name="Cooney A.J."/>
            <person name="D'Souza L.M."/>
            <person name="Martin K."/>
            <person name="Wu J.Q."/>
            <person name="Gonzalez-Garay M.L."/>
            <person name="Jackson A.R."/>
            <person name="Kalafus K.J."/>
            <person name="McLeod M.P."/>
            <person name="Milosavljevic A."/>
            <person name="Virk D."/>
            <person name="Volkov A."/>
            <person name="Wheeler D.A."/>
            <person name="Zhang Z."/>
            <person name="Bailey J.A."/>
            <person name="Eichler E.E."/>
            <person name="Tuzun E."/>
            <person name="Birney E."/>
            <person name="Mongin E."/>
            <person name="Ureta-Vidal A."/>
            <person name="Woodwark C."/>
            <person name="Zdobnov E."/>
            <person name="Bork P."/>
            <person name="Suyama M."/>
            <person name="Torrents D."/>
            <person name="Alexandersson M."/>
            <person name="Trask B.J."/>
            <person name="Young J.M."/>
            <person name="Huang H."/>
            <person name="Wang H."/>
            <person name="Xing H."/>
            <person name="Daniels S."/>
            <person name="Gietzen D."/>
            <person name="Schmidt J."/>
            <person name="Stevens K."/>
            <person name="Vitt U."/>
            <person name="Wingrove J."/>
            <person name="Camara F."/>
            <person name="Mar Alba M."/>
            <person name="Abril J.F."/>
            <person name="Guigo R."/>
            <person name="Smit A."/>
            <person name="Dubchak I."/>
            <person name="Rubin E.M."/>
            <person name="Couronne O."/>
            <person name="Poliakov A."/>
            <person name="Huebner N."/>
            <person name="Ganten D."/>
            <person name="Goesele C."/>
            <person name="Hummel O."/>
            <person name="Kreitler T."/>
            <person name="Lee Y.-A."/>
            <person name="Monti J."/>
            <person name="Schulz H."/>
            <person name="Zimdahl H."/>
            <person name="Himmelbauer H."/>
            <person name="Lehrach H."/>
            <person name="Jacob H.J."/>
            <person name="Bromberg S."/>
            <person name="Gullings-Handley J."/>
            <person name="Jensen-Seaman M.I."/>
            <person name="Kwitek A.E."/>
            <person name="Lazar J."/>
            <person name="Pasko D."/>
            <person name="Tonellato P.J."/>
            <person name="Twigger S."/>
            <person name="Ponting C.P."/>
            <person name="Duarte J.M."/>
            <person name="Rice S."/>
            <person name="Goodstadt L."/>
            <person name="Beatson S.A."/>
            <person name="Emes R.D."/>
            <person name="Winter E.E."/>
            <person name="Webber C."/>
            <person name="Brandt P."/>
            <person name="Nyakatura G."/>
            <person name="Adetobi M."/>
            <person name="Chiaromonte F."/>
            <person name="Elnitski L."/>
            <person name="Eswara P."/>
            <person name="Hardison R.C."/>
            <person name="Hou M."/>
            <person name="Kolbe D."/>
            <person name="Makova K."/>
            <person name="Miller W."/>
            <person name="Nekrutenko A."/>
            <person name="Riemer C."/>
            <person name="Schwartz S."/>
            <person name="Taylor J."/>
            <person name="Yang S."/>
            <person name="Zhang Y."/>
            <person name="Lindpaintner K."/>
            <person name="Andrews T.D."/>
            <person name="Caccamo M."/>
            <person name="Clamp M."/>
            <person name="Clarke L."/>
            <person name="Curwen V."/>
            <person name="Durbin R.M."/>
            <person name="Eyras E."/>
            <person name="Searle S.M."/>
            <person name="Cooper G.M."/>
            <person name="Batzoglou S."/>
            <person name="Brudno M."/>
            <person name="Sidow A."/>
            <person name="Stone E.A."/>
            <person name="Payseur B.A."/>
            <person name="Bourque G."/>
            <person name="Lopez-Otin C."/>
            <person name="Puente X.S."/>
            <person name="Chakrabarti K."/>
            <person name="Chatterji S."/>
            <person name="Dewey C."/>
            <person name="Pachter L."/>
            <person name="Bray N."/>
            <person name="Yap V.B."/>
            <person name="Caspi A."/>
            <person name="Tesler G."/>
            <person name="Pevzner P.A."/>
            <person name="Haussler D."/>
            <person name="Roskin K.M."/>
            <person name="Baertsch R."/>
            <person name="Clawson H."/>
            <person name="Furey T.S."/>
            <person name="Hinrichs A.S."/>
            <person name="Karolchik D."/>
            <person name="Kent W.J."/>
            <person name="Rosenbloom K.R."/>
            <person name="Trumbower H."/>
            <person name="Weirauch M."/>
            <person name="Cooper D.N."/>
            <person name="Stenson P.D."/>
            <person name="Ma B."/>
            <person name="Brent M."/>
            <person name="Arumugam M."/>
            <person name="Shteynberg D."/>
            <person name="Copley R.R."/>
            <person name="Taylor M.S."/>
            <person name="Riethman H."/>
            <person name="Mudunuri U."/>
            <person name="Peterson J."/>
            <person name="Guyer M."/>
            <person name="Felsenfeld A."/>
            <person name="Old S."/>
            <person name="Mockrin S."/>
            <person name="Collins F.S."/>
        </authorList>
    </citation>
    <scope>NUCLEOTIDE SEQUENCE [LARGE SCALE GENOMIC DNA]</scope>
    <source>
        <strain>Brown Norway</strain>
    </source>
</reference>
<reference key="2">
    <citation type="journal article" date="2008" name="J. Mol. Neurosci.">
        <title>The evolutionary history and tissue mapping of amino acid transporters belonging to solute carrier families SLC32, SLC36, and SLC38.</title>
        <authorList>
            <person name="Sundberg B.E."/>
            <person name="Waaaag E."/>
            <person name="Jacobsson J.A."/>
            <person name="Stephansson O."/>
            <person name="Rumaks J."/>
            <person name="Svirskis S."/>
            <person name="Alsioe J."/>
            <person name="Roman E."/>
            <person name="Ebendal T."/>
            <person name="Klusa V."/>
            <person name="Fredriksson R."/>
        </authorList>
    </citation>
    <scope>TISSUE SPECIFICITY</scope>
</reference>
<reference key="3">
    <citation type="journal article" date="2012" name="Nat. Commun.">
        <title>Quantitative maps of protein phosphorylation sites across 14 different rat organs and tissues.</title>
        <authorList>
            <person name="Lundby A."/>
            <person name="Secher A."/>
            <person name="Lage K."/>
            <person name="Nordsborg N.B."/>
            <person name="Dmytriyev A."/>
            <person name="Lundby C."/>
            <person name="Olsen J.V."/>
        </authorList>
    </citation>
    <scope>PHOSPHORYLATION [LARGE SCALE ANALYSIS] AT SER-441; SER-607 AND SER-886</scope>
    <scope>IDENTIFICATION BY MASS SPECTROMETRY [LARGE SCALE ANALYSIS]</scope>
</reference>
<evidence type="ECO:0000250" key="1">
    <source>
        <dbReference type="UniProtKB" id="Q5I012"/>
    </source>
</evidence>
<evidence type="ECO:0000250" key="2">
    <source>
        <dbReference type="UniProtKB" id="Q9HBR0"/>
    </source>
</evidence>
<evidence type="ECO:0000255" key="3"/>
<evidence type="ECO:0000256" key="4">
    <source>
        <dbReference type="SAM" id="MobiDB-lite"/>
    </source>
</evidence>
<evidence type="ECO:0000269" key="5">
    <source>
    </source>
</evidence>
<evidence type="ECO:0000305" key="6"/>
<evidence type="ECO:0000312" key="7">
    <source>
        <dbReference type="RGD" id="1306356"/>
    </source>
</evidence>
<evidence type="ECO:0007744" key="8">
    <source>
    </source>
</evidence>